<feature type="chain" id="PRO_0000454494" description="Protein SLOW WALKER 2">
    <location>
        <begin position="1"/>
        <end position="1043"/>
    </location>
</feature>
<feature type="region of interest" description="Disordered" evidence="2">
    <location>
        <begin position="32"/>
        <end position="113"/>
    </location>
</feature>
<feature type="region of interest" description="Disordered" evidence="2">
    <location>
        <begin position="444"/>
        <end position="469"/>
    </location>
</feature>
<feature type="region of interest" description="Disordered" evidence="2">
    <location>
        <begin position="632"/>
        <end position="737"/>
    </location>
</feature>
<feature type="region of interest" description="Disordered" evidence="2">
    <location>
        <begin position="861"/>
        <end position="1043"/>
    </location>
</feature>
<feature type="short sequence motif" description="Nuclear localization signal 1" evidence="1">
    <location>
        <begin position="44"/>
        <end position="51"/>
    </location>
</feature>
<feature type="short sequence motif" description="Nuclear localization signal 2" evidence="1">
    <location>
        <begin position="441"/>
        <end position="448"/>
    </location>
</feature>
<feature type="short sequence motif" description="Nuclear localization signal 3" evidence="1">
    <location>
        <begin position="1022"/>
        <end position="1029"/>
    </location>
</feature>
<feature type="compositionally biased region" description="Basic residues" evidence="2">
    <location>
        <begin position="47"/>
        <end position="59"/>
    </location>
</feature>
<feature type="compositionally biased region" description="Basic and acidic residues" evidence="2">
    <location>
        <begin position="80"/>
        <end position="95"/>
    </location>
</feature>
<feature type="compositionally biased region" description="Basic and acidic residues" evidence="2">
    <location>
        <begin position="444"/>
        <end position="466"/>
    </location>
</feature>
<feature type="compositionally biased region" description="Acidic residues" evidence="2">
    <location>
        <begin position="632"/>
        <end position="645"/>
    </location>
</feature>
<feature type="compositionally biased region" description="Basic and acidic residues" evidence="2">
    <location>
        <begin position="646"/>
        <end position="673"/>
    </location>
</feature>
<feature type="compositionally biased region" description="Acidic residues" evidence="2">
    <location>
        <begin position="688"/>
        <end position="699"/>
    </location>
</feature>
<feature type="compositionally biased region" description="Acidic residues" evidence="2">
    <location>
        <begin position="872"/>
        <end position="983"/>
    </location>
</feature>
<feature type="compositionally biased region" description="Basic residues" evidence="2">
    <location>
        <begin position="988"/>
        <end position="1000"/>
    </location>
</feature>
<feature type="compositionally biased region" description="Basic and acidic residues" evidence="2">
    <location>
        <begin position="1006"/>
        <end position="1031"/>
    </location>
</feature>
<feature type="compositionally biased region" description="Basic residues" evidence="2">
    <location>
        <begin position="1032"/>
        <end position="1043"/>
    </location>
</feature>
<feature type="sequence conflict" description="In Ref. 1; ABX24524." evidence="8" ref="1">
    <original>I</original>
    <variation>L</variation>
    <location>
        <position position="633"/>
    </location>
</feature>
<protein>
    <recommendedName>
        <fullName evidence="7">Protein SLOW WALKER 2</fullName>
    </recommendedName>
    <alternativeName>
        <fullName evidence="6">Protein EMBRYO SAC DEVELOPMENT ARREST 25</fullName>
    </alternativeName>
</protein>
<organism>
    <name type="scientific">Arabidopsis thaliana</name>
    <name type="common">Mouse-ear cress</name>
    <dbReference type="NCBI Taxonomy" id="3702"/>
    <lineage>
        <taxon>Eukaryota</taxon>
        <taxon>Viridiplantae</taxon>
        <taxon>Streptophyta</taxon>
        <taxon>Embryophyta</taxon>
        <taxon>Tracheophyta</taxon>
        <taxon>Spermatophyta</taxon>
        <taxon>Magnoliopsida</taxon>
        <taxon>eudicotyledons</taxon>
        <taxon>Gunneridae</taxon>
        <taxon>Pentapetalae</taxon>
        <taxon>rosids</taxon>
        <taxon>malvids</taxon>
        <taxon>Brassicales</taxon>
        <taxon>Brassicaceae</taxon>
        <taxon>Camelineae</taxon>
        <taxon>Arabidopsis</taxon>
    </lineage>
</organism>
<proteinExistence type="evidence at protein level"/>
<reference key="1">
    <citation type="journal article" date="2009" name="Plant Physiol.">
        <title>SLOW WALKER2, a NOC1/MAK21 homologue, is essential for coordinated cell cycle progression during female gametophyte development in Arabidopsis.</title>
        <authorList>
            <person name="Li N."/>
            <person name="Yuan L."/>
            <person name="Liu N."/>
            <person name="Shi D."/>
            <person name="Li X."/>
            <person name="Tang Z."/>
            <person name="Liu J."/>
            <person name="Sundaresan V."/>
            <person name="Yang W.-C."/>
        </authorList>
    </citation>
    <scope>NUCLEOTIDE SEQUENCE [MRNA]</scope>
    <scope>FUNCTION</scope>
    <scope>DISRUPTION PHENOTYPE</scope>
    <scope>SUBCELLULAR LOCATION</scope>
    <scope>INTERACTION WITH NOC2</scope>
    <scope>TISSUE SPECIFICITY</scope>
    <scope>DEVELOPMENTAL STAGE</scope>
    <source>
        <strain>cv. Landsberg erecta</strain>
    </source>
</reference>
<reference key="2">
    <citation type="journal article" date="2000" name="Nature">
        <title>Sequence and analysis of chromosome 1 of the plant Arabidopsis thaliana.</title>
        <authorList>
            <person name="Theologis A."/>
            <person name="Ecker J.R."/>
            <person name="Palm C.J."/>
            <person name="Federspiel N.A."/>
            <person name="Kaul S."/>
            <person name="White O."/>
            <person name="Alonso J."/>
            <person name="Altafi H."/>
            <person name="Araujo R."/>
            <person name="Bowman C.L."/>
            <person name="Brooks S.Y."/>
            <person name="Buehler E."/>
            <person name="Chan A."/>
            <person name="Chao Q."/>
            <person name="Chen H."/>
            <person name="Cheuk R.F."/>
            <person name="Chin C.W."/>
            <person name="Chung M.K."/>
            <person name="Conn L."/>
            <person name="Conway A.B."/>
            <person name="Conway A.R."/>
            <person name="Creasy T.H."/>
            <person name="Dewar K."/>
            <person name="Dunn P."/>
            <person name="Etgu P."/>
            <person name="Feldblyum T.V."/>
            <person name="Feng J.-D."/>
            <person name="Fong B."/>
            <person name="Fujii C.Y."/>
            <person name="Gill J.E."/>
            <person name="Goldsmith A.D."/>
            <person name="Haas B."/>
            <person name="Hansen N.F."/>
            <person name="Hughes B."/>
            <person name="Huizar L."/>
            <person name="Hunter J.L."/>
            <person name="Jenkins J."/>
            <person name="Johnson-Hopson C."/>
            <person name="Khan S."/>
            <person name="Khaykin E."/>
            <person name="Kim C.J."/>
            <person name="Koo H.L."/>
            <person name="Kremenetskaia I."/>
            <person name="Kurtz D.B."/>
            <person name="Kwan A."/>
            <person name="Lam B."/>
            <person name="Langin-Hooper S."/>
            <person name="Lee A."/>
            <person name="Lee J.M."/>
            <person name="Lenz C.A."/>
            <person name="Li J.H."/>
            <person name="Li Y.-P."/>
            <person name="Lin X."/>
            <person name="Liu S.X."/>
            <person name="Liu Z.A."/>
            <person name="Luros J.S."/>
            <person name="Maiti R."/>
            <person name="Marziali A."/>
            <person name="Militscher J."/>
            <person name="Miranda M."/>
            <person name="Nguyen M."/>
            <person name="Nierman W.C."/>
            <person name="Osborne B.I."/>
            <person name="Pai G."/>
            <person name="Peterson J."/>
            <person name="Pham P.K."/>
            <person name="Rizzo M."/>
            <person name="Rooney T."/>
            <person name="Rowley D."/>
            <person name="Sakano H."/>
            <person name="Salzberg S.L."/>
            <person name="Schwartz J.R."/>
            <person name="Shinn P."/>
            <person name="Southwick A.M."/>
            <person name="Sun H."/>
            <person name="Tallon L.J."/>
            <person name="Tambunga G."/>
            <person name="Toriumi M.J."/>
            <person name="Town C.D."/>
            <person name="Utterback T."/>
            <person name="Van Aken S."/>
            <person name="Vaysberg M."/>
            <person name="Vysotskaia V.S."/>
            <person name="Walker M."/>
            <person name="Wu D."/>
            <person name="Yu G."/>
            <person name="Fraser C.M."/>
            <person name="Venter J.C."/>
            <person name="Davis R.W."/>
        </authorList>
    </citation>
    <scope>NUCLEOTIDE SEQUENCE [LARGE SCALE GENOMIC DNA]</scope>
    <source>
        <strain>cv. Columbia</strain>
    </source>
</reference>
<reference key="3">
    <citation type="journal article" date="2017" name="Plant J.">
        <title>Araport11: a complete reannotation of the Arabidopsis thaliana reference genome.</title>
        <authorList>
            <person name="Cheng C.Y."/>
            <person name="Krishnakumar V."/>
            <person name="Chan A.P."/>
            <person name="Thibaud-Nissen F."/>
            <person name="Schobel S."/>
            <person name="Town C.D."/>
        </authorList>
    </citation>
    <scope>GENOME REANNOTATION</scope>
    <source>
        <strain>cv. Columbia</strain>
    </source>
</reference>
<reference key="4">
    <citation type="journal article" date="2005" name="Development">
        <title>Genetic and molecular identification of genes required for female gametophyte development and function in Arabidopsis.</title>
        <authorList>
            <person name="Pagnussat G.C."/>
            <person name="Yu H.-J."/>
            <person name="Ngo Q.A."/>
            <person name="Rajani S."/>
            <person name="Mayalagu S."/>
            <person name="Johnson C.S."/>
            <person name="Capron A."/>
            <person name="Xie L.-F."/>
            <person name="Ye D."/>
            <person name="Sundaresan V."/>
        </authorList>
    </citation>
    <scope>FUNCTION</scope>
    <scope>DISRUPTION PHENOTYPE</scope>
</reference>
<reference key="5">
    <citation type="journal article" date="2018" name="FEBS Open Bio">
        <title>REBELOTE, a regulator of floral determinacy in Arabidopsis thaliana, interacts with both nucleolar and nucleoplasmic proteins.</title>
        <authorList>
            <person name="de Bossoreille S."/>
            <person name="Morel P."/>
            <person name="Trehin C."/>
            <person name="Negrutiu I."/>
        </authorList>
    </citation>
    <scope>INTERACTION WITH RBL AND NOC2</scope>
</reference>
<comment type="function">
    <text evidence="3 4">Together with NOC2, probably involved in pre-ribosome export from the nucleus to the cytoplasm (PubMed:19734265). Required for coordinated cell cycle progression during female gametophyte and pollen development (PubMed:15634699, PubMed:19734265).</text>
</comment>
<comment type="subunit">
    <text evidence="4 5">Interacts with RBL in both the nucleolus and nucleoplasm (PubMed:30338215). Binds to NOC2 (PubMed:19734265, PubMed:30338215).</text>
</comment>
<comment type="subcellular location">
    <subcellularLocation>
        <location evidence="1">Nucleus</location>
    </subcellularLocation>
    <subcellularLocation>
        <location evidence="4">Nucleus</location>
        <location evidence="4">Nucleolus</location>
    </subcellularLocation>
</comment>
<comment type="tissue specificity">
    <text evidence="4">Mainly expressed in actively dividing tissues (e.g. root tips, lateral root primordia, shoot apices, young leaves, inflorescences and pollen grains) through the plant, including roots, stems, leaves, inflorescences, siliques and seedlings, and in gametophytes.</text>
</comment>
<comment type="developmental stage">
    <text evidence="4">During female gametophyte development, detected in the gametophytic nucleus from one-nucleate to two-nucleate stages, and fades out progressively during ovule maturation to be confined to the central cell of mature embryo sac.</text>
</comment>
<comment type="disruption phenotype">
    <text evidence="3 4">Female gametophyte mutant with impaired progression of the mitotic cycles and lost synchrony of female gametophyte development leading to an arrest of female gametophytes at the two-, four-, or eight-nucleate stage and characterized by unfused polar nuclei (PubMed:15634699, PubMed:19734265). Defective pollen development (PubMed:19734265).</text>
</comment>
<comment type="similarity">
    <text evidence="8">Belongs to the CBF/MAK21 family.</text>
</comment>
<comment type="sequence caution" evidence="8">
    <conflict type="erroneous gene model prediction">
        <sequence resource="EMBL-CDS" id="AAG52578"/>
    </conflict>
</comment>
<evidence type="ECO:0000255" key="1">
    <source>
        <dbReference type="PROSITE-ProRule" id="PRU00768"/>
    </source>
</evidence>
<evidence type="ECO:0000256" key="2">
    <source>
        <dbReference type="SAM" id="MobiDB-lite"/>
    </source>
</evidence>
<evidence type="ECO:0000269" key="3">
    <source>
    </source>
</evidence>
<evidence type="ECO:0000269" key="4">
    <source>
    </source>
</evidence>
<evidence type="ECO:0000269" key="5">
    <source>
    </source>
</evidence>
<evidence type="ECO:0000303" key="6">
    <source>
    </source>
</evidence>
<evidence type="ECO:0000303" key="7">
    <source>
    </source>
</evidence>
<evidence type="ECO:0000305" key="8"/>
<evidence type="ECO:0000312" key="9">
    <source>
        <dbReference type="Araport" id="AT1G72440"/>
    </source>
</evidence>
<evidence type="ECO:0000312" key="10">
    <source>
        <dbReference type="EMBL" id="AAG52578.1"/>
    </source>
</evidence>
<accession>F4IDC2</accession>
<accession>B3TIK7</accession>
<accession>Q9C9E2</accession>
<keyword id="KW-0539">Nucleus</keyword>
<keyword id="KW-1185">Reference proteome</keyword>
<gene>
    <name evidence="7" type="primary">SWA2</name>
    <name evidence="6" type="synonym">EDA25</name>
    <name evidence="9" type="ordered locus">At1g72440</name>
    <name evidence="10" type="ORF">T10D10.9</name>
</gene>
<name>SWA2_ARATH</name>
<sequence>MSKIKPLSKSSQDLSLLTSDIASFASSIGLASALPSSGFNDTDFRKPAKSKTQKRKKPKKDQQHKDEDEEGEPKSNIGNEKGKDFGARKQNKDAPVKQTLQPKPKPGFLSIDDESTGYKKKRFDEFKSLPKLPLVKASLLSSEWYNDAAEFEEKVFGGRKVAVANKEDFKGVVEKKRELGERLMWQYAEDFATSKGKGGDMKMVISAQKSGTVADKITAFEIMVGENPIANMRSLDALLGMVTSKVGKRFAFKGLKALSEILIRLLPDRKLKSLLQRPLNIIPENKDGYSLLLFWYWEDCLKQRYERFVTALDESSKDMLPELKDKALKTIYFMLTSKSEQERKLLVSLVNKLGDPQNKSASNADYHLTNLLADHPNMKAVVIDEVDSFLFRPHLGLRAKYHAVNFLSQIRLSHKGEDPKVAKRLIDVYFALFKVLTTEANRKQGADDKGAADKKKSNPKDTKQEVSTDSPIELDSRILSALLTGVNRAFPYVSTDEADDIIESQTPVLFKLVHSANFNVGVQSLMLLDKISSKNKIVSDRFYRALYSKLLLPSAMNSSKAEMFIGLLLRAMKNDINIKRVAAFSKRVLQVALQQPPQYACGCLFLLSEVLKSRPPLWKMVVQRESVEEEEDIEHFEDVIEGDDVDPNKKAENDENVVEVDHDGVEKSSRDGDSSSDDEEALAIRLSDEEDDNASDDSEELIRNETPQLEEVMEVSNDMEKRSQPPMRPSSLPGGYDPRHREPSYCNADRASWWELGVLSKHAHPSVATMAGTLLSGTNIVYNGNPLNDLSLTAFLDKFMEKKPKQNTWHGGSQIEPSKKLDMSNRVIGAEILSLAEGDVAPEDLVFHKFYVNKMTSTKQSKKKKKKKLPEEEAAEELYDVNDGDGGENYDSDVEFEAGDESDNEEIENMLDDVDDNAVEEEGGEYDYDDLDGVAGEDDEELVADVSDAEMDTDMDMDLIDDEDDNNVDDDGTGDGGDDDSDGDDGRSKKKKKEKRKRKSPFASLEEYKHLIDQDEKEDSKTKRKATSEPTKKKKKKKSKASE</sequence>
<dbReference type="EMBL" id="EU170440">
    <property type="protein sequence ID" value="ABX24524.1"/>
    <property type="molecule type" value="mRNA"/>
</dbReference>
<dbReference type="EMBL" id="AC016529">
    <property type="protein sequence ID" value="AAG52578.1"/>
    <property type="status" value="ALT_SEQ"/>
    <property type="molecule type" value="Genomic_DNA"/>
</dbReference>
<dbReference type="EMBL" id="CP002684">
    <property type="protein sequence ID" value="AEE35325.1"/>
    <property type="molecule type" value="Genomic_DNA"/>
</dbReference>
<dbReference type="PIR" id="E96748">
    <property type="entry name" value="E96748"/>
</dbReference>
<dbReference type="RefSeq" id="NP_177388.2">
    <property type="nucleotide sequence ID" value="NM_105903.4"/>
</dbReference>
<dbReference type="SMR" id="F4IDC2"/>
<dbReference type="FunCoup" id="F4IDC2">
    <property type="interactions" value="3707"/>
</dbReference>
<dbReference type="STRING" id="3702.F4IDC2"/>
<dbReference type="iPTMnet" id="F4IDC2"/>
<dbReference type="PaxDb" id="3702-AT1G72440.1"/>
<dbReference type="ProteomicsDB" id="197460"/>
<dbReference type="EnsemblPlants" id="AT1G72440.1">
    <property type="protein sequence ID" value="AT1G72440.1"/>
    <property type="gene ID" value="AT1G72440"/>
</dbReference>
<dbReference type="GeneID" id="843576"/>
<dbReference type="Gramene" id="AT1G72440.1">
    <property type="protein sequence ID" value="AT1G72440.1"/>
    <property type="gene ID" value="AT1G72440"/>
</dbReference>
<dbReference type="KEGG" id="ath:AT1G72440"/>
<dbReference type="Araport" id="AT1G72440"/>
<dbReference type="TAIR" id="AT1G72440">
    <property type="gene designation" value="EDA25"/>
</dbReference>
<dbReference type="eggNOG" id="KOG2038">
    <property type="taxonomic scope" value="Eukaryota"/>
</dbReference>
<dbReference type="HOGENOM" id="CLU_003417_1_1_1"/>
<dbReference type="InParanoid" id="F4IDC2"/>
<dbReference type="OMA" id="EIWCNDE"/>
<dbReference type="CD-CODE" id="4299E36E">
    <property type="entry name" value="Nucleolus"/>
</dbReference>
<dbReference type="PRO" id="PR:F4IDC2"/>
<dbReference type="Proteomes" id="UP000006548">
    <property type="component" value="Chromosome 1"/>
</dbReference>
<dbReference type="ExpressionAtlas" id="F4IDC2">
    <property type="expression patterns" value="baseline and differential"/>
</dbReference>
<dbReference type="GO" id="GO:0005730">
    <property type="term" value="C:nucleolus"/>
    <property type="evidence" value="ECO:0000314"/>
    <property type="project" value="TAIR"/>
</dbReference>
<dbReference type="GO" id="GO:0009553">
    <property type="term" value="P:embryo sac development"/>
    <property type="evidence" value="ECO:0000315"/>
    <property type="project" value="TAIR"/>
</dbReference>
<dbReference type="GO" id="GO:0010197">
    <property type="term" value="P:polar nucleus fusion"/>
    <property type="evidence" value="ECO:0000315"/>
    <property type="project" value="TAIR"/>
</dbReference>
<dbReference type="GO" id="GO:0009555">
    <property type="term" value="P:pollen development"/>
    <property type="evidence" value="ECO:0000315"/>
    <property type="project" value="UniProtKB"/>
</dbReference>
<dbReference type="GO" id="GO:0051302">
    <property type="term" value="P:regulation of cell division"/>
    <property type="evidence" value="ECO:0000315"/>
    <property type="project" value="UniProtKB"/>
</dbReference>
<dbReference type="InterPro" id="IPR016024">
    <property type="entry name" value="ARM-type_fold"/>
</dbReference>
<dbReference type="InterPro" id="IPR005612">
    <property type="entry name" value="CCAAT-binding_factor"/>
</dbReference>
<dbReference type="InterPro" id="IPR040155">
    <property type="entry name" value="CEBPZ/Mak21-like"/>
</dbReference>
<dbReference type="PANTHER" id="PTHR12048">
    <property type="entry name" value="CCAAT-BINDING FACTOR-RELATED"/>
    <property type="match status" value="1"/>
</dbReference>
<dbReference type="PANTHER" id="PTHR12048:SF0">
    <property type="entry name" value="CCAAT_ENHANCER-BINDING PROTEIN ZETA"/>
    <property type="match status" value="1"/>
</dbReference>
<dbReference type="Pfam" id="PF03914">
    <property type="entry name" value="CBF"/>
    <property type="match status" value="1"/>
</dbReference>
<dbReference type="SUPFAM" id="SSF48371">
    <property type="entry name" value="ARM repeat"/>
    <property type="match status" value="1"/>
</dbReference>